<protein>
    <recommendedName>
        <fullName evidence="4">Peroxisome assembly protein 26</fullName>
    </recommendedName>
    <alternativeName>
        <fullName evidence="4">Peroxin-26</fullName>
    </alternativeName>
</protein>
<evidence type="ECO:0000250" key="1">
    <source>
        <dbReference type="UniProtKB" id="Q7Z412"/>
    </source>
</evidence>
<evidence type="ECO:0000255" key="2"/>
<evidence type="ECO:0000303" key="3">
    <source>
    </source>
</evidence>
<evidence type="ECO:0000305" key="4"/>
<evidence type="ECO:0000312" key="5">
    <source>
        <dbReference type="MGI" id="MGI:1921293"/>
    </source>
</evidence>
<dbReference type="EMBL" id="AK014598">
    <property type="protein sequence ID" value="BAB29453.1"/>
    <property type="molecule type" value="mRNA"/>
</dbReference>
<dbReference type="EMBL" id="AK040411">
    <property type="protein sequence ID" value="BAC30589.1"/>
    <property type="molecule type" value="mRNA"/>
</dbReference>
<dbReference type="EMBL" id="AK042663">
    <property type="protein sequence ID" value="BAC31324.1"/>
    <property type="molecule type" value="mRNA"/>
</dbReference>
<dbReference type="EMBL" id="AK044186">
    <property type="protein sequence ID" value="BAC31808.1"/>
    <property type="molecule type" value="mRNA"/>
</dbReference>
<dbReference type="EMBL" id="AK087637">
    <property type="protein sequence ID" value="BAC39952.1"/>
    <property type="molecule type" value="mRNA"/>
</dbReference>
<dbReference type="EMBL" id="AK147925">
    <property type="protein sequence ID" value="BAE28233.1"/>
    <property type="molecule type" value="mRNA"/>
</dbReference>
<dbReference type="EMBL" id="BC019144">
    <property type="protein sequence ID" value="AAH19144.1"/>
    <property type="molecule type" value="mRNA"/>
</dbReference>
<dbReference type="EMBL" id="BC058694">
    <property type="protein sequence ID" value="AAH58694.1"/>
    <property type="molecule type" value="mRNA"/>
</dbReference>
<dbReference type="CCDS" id="CCDS20488.1">
    <molecule id="Q8BGI5-1"/>
</dbReference>
<dbReference type="CCDS" id="CCDS80603.1">
    <molecule id="Q8BGI5-2"/>
</dbReference>
<dbReference type="RefSeq" id="NP_001291702.1">
    <molecule id="Q8BGI5-2"/>
    <property type="nucleotide sequence ID" value="NM_001304773.1"/>
</dbReference>
<dbReference type="RefSeq" id="NP_001291703.1">
    <property type="nucleotide sequence ID" value="NM_001304774.1"/>
</dbReference>
<dbReference type="RefSeq" id="NP_083006.1">
    <molecule id="Q8BGI5-1"/>
    <property type="nucleotide sequence ID" value="NM_028730.6"/>
</dbReference>
<dbReference type="SMR" id="Q8BGI5"/>
<dbReference type="FunCoup" id="Q8BGI5">
    <property type="interactions" value="813"/>
</dbReference>
<dbReference type="STRING" id="10090.ENSMUSP00000085921"/>
<dbReference type="iPTMnet" id="Q8BGI5"/>
<dbReference type="PhosphoSitePlus" id="Q8BGI5"/>
<dbReference type="jPOST" id="Q8BGI5"/>
<dbReference type="PaxDb" id="10090-ENSMUSP00000085921"/>
<dbReference type="ProteomicsDB" id="289471">
    <molecule id="Q8BGI5-1"/>
</dbReference>
<dbReference type="ProteomicsDB" id="289472">
    <molecule id="Q8BGI5-2"/>
</dbReference>
<dbReference type="Pumba" id="Q8BGI5"/>
<dbReference type="Ensembl" id="ENSMUST00000088561.10">
    <molecule id="Q8BGI5-1"/>
    <property type="protein sequence ID" value="ENSMUSP00000085921.4"/>
    <property type="gene ID" value="ENSMUSG00000067825.12"/>
</dbReference>
<dbReference type="Ensembl" id="ENSMUST00000120066.8">
    <molecule id="Q8BGI5-2"/>
    <property type="protein sequence ID" value="ENSMUSP00000113233.2"/>
    <property type="gene ID" value="ENSMUSG00000067825.12"/>
</dbReference>
<dbReference type="Ensembl" id="ENSMUST00000125633.2">
    <molecule id="Q8BGI5-1"/>
    <property type="protein sequence ID" value="ENSMUSP00000117444.2"/>
    <property type="gene ID" value="ENSMUSG00000067825.12"/>
</dbReference>
<dbReference type="GeneID" id="74043"/>
<dbReference type="KEGG" id="mmu:74043"/>
<dbReference type="UCSC" id="uc009dod.2">
    <molecule id="Q8BGI5-1"/>
    <property type="organism name" value="mouse"/>
</dbReference>
<dbReference type="UCSC" id="uc009doe.2">
    <molecule id="Q8BGI5-2"/>
    <property type="organism name" value="mouse"/>
</dbReference>
<dbReference type="AGR" id="MGI:1921293"/>
<dbReference type="CTD" id="55670"/>
<dbReference type="MGI" id="MGI:1921293">
    <property type="gene designation" value="Pex26"/>
</dbReference>
<dbReference type="VEuPathDB" id="HostDB:ENSMUSG00000067825"/>
<dbReference type="eggNOG" id="ENOG502RXMN">
    <property type="taxonomic scope" value="Eukaryota"/>
</dbReference>
<dbReference type="GeneTree" id="ENSGT00510000049725"/>
<dbReference type="InParanoid" id="Q8BGI5"/>
<dbReference type="OMA" id="QTCERAW"/>
<dbReference type="OrthoDB" id="5954192at2759"/>
<dbReference type="PhylomeDB" id="Q8BGI5"/>
<dbReference type="TreeFam" id="TF332318"/>
<dbReference type="Reactome" id="R-MMU-9033241">
    <property type="pathway name" value="Peroxisomal protein import"/>
</dbReference>
<dbReference type="Reactome" id="R-MMU-9603798">
    <property type="pathway name" value="Class I peroxisomal membrane protein import"/>
</dbReference>
<dbReference type="BioGRID-ORCS" id="74043">
    <property type="hits" value="3 hits in 60 CRISPR screens"/>
</dbReference>
<dbReference type="ChiTaRS" id="Pex26">
    <property type="organism name" value="mouse"/>
</dbReference>
<dbReference type="PRO" id="PR:Q8BGI5"/>
<dbReference type="Proteomes" id="UP000000589">
    <property type="component" value="Chromosome 6"/>
</dbReference>
<dbReference type="RNAct" id="Q8BGI5">
    <property type="molecule type" value="protein"/>
</dbReference>
<dbReference type="Bgee" id="ENSMUSG00000067825">
    <property type="expression patterns" value="Expressed in secondary oocyte and 247 other cell types or tissues"/>
</dbReference>
<dbReference type="ExpressionAtlas" id="Q8BGI5">
    <property type="expression patterns" value="baseline and differential"/>
</dbReference>
<dbReference type="GO" id="GO:0005778">
    <property type="term" value="C:peroxisomal membrane"/>
    <property type="evidence" value="ECO:0000250"/>
    <property type="project" value="UniProtKB"/>
</dbReference>
<dbReference type="GO" id="GO:0051117">
    <property type="term" value="F:ATPase binding"/>
    <property type="evidence" value="ECO:0007669"/>
    <property type="project" value="Ensembl"/>
</dbReference>
<dbReference type="GO" id="GO:0044877">
    <property type="term" value="F:protein-containing complex binding"/>
    <property type="evidence" value="ECO:0007669"/>
    <property type="project" value="Ensembl"/>
</dbReference>
<dbReference type="GO" id="GO:0043495">
    <property type="term" value="F:protein-membrane adaptor activity"/>
    <property type="evidence" value="ECO:0000250"/>
    <property type="project" value="UniProtKB"/>
</dbReference>
<dbReference type="GO" id="GO:0016558">
    <property type="term" value="P:protein import into peroxisome matrix"/>
    <property type="evidence" value="ECO:0000250"/>
    <property type="project" value="UniProtKB"/>
</dbReference>
<dbReference type="GO" id="GO:0045046">
    <property type="term" value="P:protein import into peroxisome membrane"/>
    <property type="evidence" value="ECO:0007669"/>
    <property type="project" value="InterPro"/>
</dbReference>
<dbReference type="GO" id="GO:0022615">
    <property type="term" value="P:protein to membrane docking"/>
    <property type="evidence" value="ECO:0000250"/>
    <property type="project" value="UniProtKB"/>
</dbReference>
<dbReference type="InterPro" id="IPR010797">
    <property type="entry name" value="Pex26"/>
</dbReference>
<dbReference type="PANTHER" id="PTHR16262">
    <property type="entry name" value="PEROXISOME ASSEMBLY PROTEIN 26"/>
    <property type="match status" value="1"/>
</dbReference>
<dbReference type="PANTHER" id="PTHR16262:SF2">
    <property type="entry name" value="PEROXISOME ASSEMBLY PROTEIN 26"/>
    <property type="match status" value="1"/>
</dbReference>
<dbReference type="Pfam" id="PF07163">
    <property type="entry name" value="Pex26"/>
    <property type="match status" value="1"/>
</dbReference>
<proteinExistence type="evidence at protein level"/>
<sequence length="305" mass="34016">MKSDASTSAAPLKGLVGPLRSSEPALALPAVSPAVHLLEEASDLLVVHLDFHAALETCERAWQSLAEEPVSGTIVEVKCSLCVVGIQALAEMDRWREALSWVLRYYQVPEKLPPKVLELCILLYSKMKEPGAVLDVASAWLQDPDNQGLPDYGSLARLHVFRLLLPSGRLSEAEELAVRSAAFSEEQRVEALQAIHLARQQHTQEHTQEHSDSQEPQKLRQEGSFSQKLLSLLMLLRRLWGSVVSHLLSQPFRKGLLAALILCLLILRFDPAAPSSLPFLYQLTQLFRRIQKATLSRLYPLALRD</sequence>
<accession>Q8BGI5</accession>
<accession>Q3UGH5</accession>
<accession>Q9D661</accession>
<keyword id="KW-0025">Alternative splicing</keyword>
<keyword id="KW-0472">Membrane</keyword>
<keyword id="KW-0576">Peroxisome</keyword>
<keyword id="KW-0653">Protein transport</keyword>
<keyword id="KW-1185">Reference proteome</keyword>
<keyword id="KW-0735">Signal-anchor</keyword>
<keyword id="KW-0812">Transmembrane</keyword>
<keyword id="KW-1133">Transmembrane helix</keyword>
<keyword id="KW-0813">Transport</keyword>
<reference key="1">
    <citation type="journal article" date="2005" name="Science">
        <title>The transcriptional landscape of the mammalian genome.</title>
        <authorList>
            <person name="Carninci P."/>
            <person name="Kasukawa T."/>
            <person name="Katayama S."/>
            <person name="Gough J."/>
            <person name="Frith M.C."/>
            <person name="Maeda N."/>
            <person name="Oyama R."/>
            <person name="Ravasi T."/>
            <person name="Lenhard B."/>
            <person name="Wells C."/>
            <person name="Kodzius R."/>
            <person name="Shimokawa K."/>
            <person name="Bajic V.B."/>
            <person name="Brenner S.E."/>
            <person name="Batalov S."/>
            <person name="Forrest A.R."/>
            <person name="Zavolan M."/>
            <person name="Davis M.J."/>
            <person name="Wilming L.G."/>
            <person name="Aidinis V."/>
            <person name="Allen J.E."/>
            <person name="Ambesi-Impiombato A."/>
            <person name="Apweiler R."/>
            <person name="Aturaliya R.N."/>
            <person name="Bailey T.L."/>
            <person name="Bansal M."/>
            <person name="Baxter L."/>
            <person name="Beisel K.W."/>
            <person name="Bersano T."/>
            <person name="Bono H."/>
            <person name="Chalk A.M."/>
            <person name="Chiu K.P."/>
            <person name="Choudhary V."/>
            <person name="Christoffels A."/>
            <person name="Clutterbuck D.R."/>
            <person name="Crowe M.L."/>
            <person name="Dalla E."/>
            <person name="Dalrymple B.P."/>
            <person name="de Bono B."/>
            <person name="Della Gatta G."/>
            <person name="di Bernardo D."/>
            <person name="Down T."/>
            <person name="Engstrom P."/>
            <person name="Fagiolini M."/>
            <person name="Faulkner G."/>
            <person name="Fletcher C.F."/>
            <person name="Fukushima T."/>
            <person name="Furuno M."/>
            <person name="Futaki S."/>
            <person name="Gariboldi M."/>
            <person name="Georgii-Hemming P."/>
            <person name="Gingeras T.R."/>
            <person name="Gojobori T."/>
            <person name="Green R.E."/>
            <person name="Gustincich S."/>
            <person name="Harbers M."/>
            <person name="Hayashi Y."/>
            <person name="Hensch T.K."/>
            <person name="Hirokawa N."/>
            <person name="Hill D."/>
            <person name="Huminiecki L."/>
            <person name="Iacono M."/>
            <person name="Ikeo K."/>
            <person name="Iwama A."/>
            <person name="Ishikawa T."/>
            <person name="Jakt M."/>
            <person name="Kanapin A."/>
            <person name="Katoh M."/>
            <person name="Kawasawa Y."/>
            <person name="Kelso J."/>
            <person name="Kitamura H."/>
            <person name="Kitano H."/>
            <person name="Kollias G."/>
            <person name="Krishnan S.P."/>
            <person name="Kruger A."/>
            <person name="Kummerfeld S.K."/>
            <person name="Kurochkin I.V."/>
            <person name="Lareau L.F."/>
            <person name="Lazarevic D."/>
            <person name="Lipovich L."/>
            <person name="Liu J."/>
            <person name="Liuni S."/>
            <person name="McWilliam S."/>
            <person name="Madan Babu M."/>
            <person name="Madera M."/>
            <person name="Marchionni L."/>
            <person name="Matsuda H."/>
            <person name="Matsuzawa S."/>
            <person name="Miki H."/>
            <person name="Mignone F."/>
            <person name="Miyake S."/>
            <person name="Morris K."/>
            <person name="Mottagui-Tabar S."/>
            <person name="Mulder N."/>
            <person name="Nakano N."/>
            <person name="Nakauchi H."/>
            <person name="Ng P."/>
            <person name="Nilsson R."/>
            <person name="Nishiguchi S."/>
            <person name="Nishikawa S."/>
            <person name="Nori F."/>
            <person name="Ohara O."/>
            <person name="Okazaki Y."/>
            <person name="Orlando V."/>
            <person name="Pang K.C."/>
            <person name="Pavan W.J."/>
            <person name="Pavesi G."/>
            <person name="Pesole G."/>
            <person name="Petrovsky N."/>
            <person name="Piazza S."/>
            <person name="Reed J."/>
            <person name="Reid J.F."/>
            <person name="Ring B.Z."/>
            <person name="Ringwald M."/>
            <person name="Rost B."/>
            <person name="Ruan Y."/>
            <person name="Salzberg S.L."/>
            <person name="Sandelin A."/>
            <person name="Schneider C."/>
            <person name="Schoenbach C."/>
            <person name="Sekiguchi K."/>
            <person name="Semple C.A."/>
            <person name="Seno S."/>
            <person name="Sessa L."/>
            <person name="Sheng Y."/>
            <person name="Shibata Y."/>
            <person name="Shimada H."/>
            <person name="Shimada K."/>
            <person name="Silva D."/>
            <person name="Sinclair B."/>
            <person name="Sperling S."/>
            <person name="Stupka E."/>
            <person name="Sugiura K."/>
            <person name="Sultana R."/>
            <person name="Takenaka Y."/>
            <person name="Taki K."/>
            <person name="Tammoja K."/>
            <person name="Tan S.L."/>
            <person name="Tang S."/>
            <person name="Taylor M.S."/>
            <person name="Tegner J."/>
            <person name="Teichmann S.A."/>
            <person name="Ueda H.R."/>
            <person name="van Nimwegen E."/>
            <person name="Verardo R."/>
            <person name="Wei C.L."/>
            <person name="Yagi K."/>
            <person name="Yamanishi H."/>
            <person name="Zabarovsky E."/>
            <person name="Zhu S."/>
            <person name="Zimmer A."/>
            <person name="Hide W."/>
            <person name="Bult C."/>
            <person name="Grimmond S.M."/>
            <person name="Teasdale R.D."/>
            <person name="Liu E.T."/>
            <person name="Brusic V."/>
            <person name="Quackenbush J."/>
            <person name="Wahlestedt C."/>
            <person name="Mattick J.S."/>
            <person name="Hume D.A."/>
            <person name="Kai C."/>
            <person name="Sasaki D."/>
            <person name="Tomaru Y."/>
            <person name="Fukuda S."/>
            <person name="Kanamori-Katayama M."/>
            <person name="Suzuki M."/>
            <person name="Aoki J."/>
            <person name="Arakawa T."/>
            <person name="Iida J."/>
            <person name="Imamura K."/>
            <person name="Itoh M."/>
            <person name="Kato T."/>
            <person name="Kawaji H."/>
            <person name="Kawagashira N."/>
            <person name="Kawashima T."/>
            <person name="Kojima M."/>
            <person name="Kondo S."/>
            <person name="Konno H."/>
            <person name="Nakano K."/>
            <person name="Ninomiya N."/>
            <person name="Nishio T."/>
            <person name="Okada M."/>
            <person name="Plessy C."/>
            <person name="Shibata K."/>
            <person name="Shiraki T."/>
            <person name="Suzuki S."/>
            <person name="Tagami M."/>
            <person name="Waki K."/>
            <person name="Watahiki A."/>
            <person name="Okamura-Oho Y."/>
            <person name="Suzuki H."/>
            <person name="Kawai J."/>
            <person name="Hayashizaki Y."/>
        </authorList>
    </citation>
    <scope>NUCLEOTIDE SEQUENCE [LARGE SCALE MRNA] (ISOFORMS 1 AND 2)</scope>
    <source>
        <strain>C57BL/6J</strain>
        <tissue>Brain cortex</tissue>
        <tissue>Cerebellum</tissue>
        <tissue>Oviduct</tissue>
        <tissue>Skin</tissue>
        <tissue>Thymus</tissue>
    </source>
</reference>
<reference key="2">
    <citation type="journal article" date="2004" name="Genome Res.">
        <title>The status, quality, and expansion of the NIH full-length cDNA project: the Mammalian Gene Collection (MGC).</title>
        <authorList>
            <consortium name="The MGC Project Team"/>
        </authorList>
    </citation>
    <scope>NUCLEOTIDE SEQUENCE [LARGE SCALE MRNA] (ISOFORM 1)</scope>
    <source>
        <strain>C57BL/6J</strain>
        <tissue>Brain</tissue>
        <tissue>Liver</tissue>
    </source>
</reference>
<reference key="3">
    <citation type="journal article" date="2010" name="Cell">
        <title>A tissue-specific atlas of mouse protein phosphorylation and expression.</title>
        <authorList>
            <person name="Huttlin E.L."/>
            <person name="Jedrychowski M.P."/>
            <person name="Elias J.E."/>
            <person name="Goswami T."/>
            <person name="Rad R."/>
            <person name="Beausoleil S.A."/>
            <person name="Villen J."/>
            <person name="Haas W."/>
            <person name="Sowa M.E."/>
            <person name="Gygi S.P."/>
        </authorList>
    </citation>
    <scope>IDENTIFICATION BY MASS SPECTROMETRY [LARGE SCALE ANALYSIS]</scope>
    <source>
        <tissue>Kidney</tissue>
        <tissue>Liver</tissue>
        <tissue>Testis</tissue>
    </source>
</reference>
<organism>
    <name type="scientific">Mus musculus</name>
    <name type="common">Mouse</name>
    <dbReference type="NCBI Taxonomy" id="10090"/>
    <lineage>
        <taxon>Eukaryota</taxon>
        <taxon>Metazoa</taxon>
        <taxon>Chordata</taxon>
        <taxon>Craniata</taxon>
        <taxon>Vertebrata</taxon>
        <taxon>Euteleostomi</taxon>
        <taxon>Mammalia</taxon>
        <taxon>Eutheria</taxon>
        <taxon>Euarchontoglires</taxon>
        <taxon>Glires</taxon>
        <taxon>Rodentia</taxon>
        <taxon>Myomorpha</taxon>
        <taxon>Muroidea</taxon>
        <taxon>Muridae</taxon>
        <taxon>Murinae</taxon>
        <taxon>Mus</taxon>
        <taxon>Mus</taxon>
    </lineage>
</organism>
<name>PEX26_MOUSE</name>
<comment type="function">
    <text evidence="1">Peroxisomal docking factor that anchors PEX1 and PEX6 to peroxisome membranes. PEX26 is therefore required for the formation of the PEX1-PEX6 AAA ATPase complex, a complex that mediates the extraction of the PEX5 receptor from peroxisomal membrane.</text>
</comment>
<comment type="subunit">
    <text evidence="1">Interacts (via its cytoplasmic domain) with PEX6; interaction is direct and is ATP-dependent. Interacts with PEX1; interaction is indirect and is mediated via interaction with PEX6.</text>
</comment>
<comment type="subcellular location">
    <subcellularLocation>
        <location evidence="1">Peroxisome membrane</location>
        <topology evidence="1">Single-pass type II membrane protein</topology>
    </subcellularLocation>
</comment>
<comment type="alternative products">
    <event type="alternative splicing"/>
    <isoform>
        <id>Q8BGI5-1</id>
        <name>1</name>
        <sequence type="displayed"/>
    </isoform>
    <isoform>
        <id>Q8BGI5-2</id>
        <name>2</name>
        <sequence type="described" ref="VSP_010444"/>
    </isoform>
</comment>
<comment type="similarity">
    <text evidence="4">Belongs to the peroxin-26 family.</text>
</comment>
<gene>
    <name evidence="5" type="primary">Pex26</name>
</gene>
<feature type="chain" id="PRO_0000058342" description="Peroxisome assembly protein 26">
    <location>
        <begin position="1"/>
        <end position="305"/>
    </location>
</feature>
<feature type="topological domain" description="Cytoplasmic" evidence="1">
    <location>
        <begin position="1"/>
        <end position="246"/>
    </location>
</feature>
<feature type="transmembrane region" description="Helical; Signal-anchor for type II membrane protein" evidence="2">
    <location>
        <begin position="247"/>
        <end position="267"/>
    </location>
</feature>
<feature type="topological domain" description="Peroxisomal matrix" evidence="1">
    <location>
        <begin position="268"/>
        <end position="305"/>
    </location>
</feature>
<feature type="splice variant" id="VSP_010444" description="In isoform 2." evidence="3">
    <location>
        <position position="272"/>
    </location>
</feature>